<evidence type="ECO:0000255" key="1">
    <source>
        <dbReference type="HAMAP-Rule" id="MF_00038"/>
    </source>
</evidence>
<protein>
    <recommendedName>
        <fullName evidence="1">Phospho-N-acetylmuramoyl-pentapeptide-transferase</fullName>
        <ecNumber evidence="1">2.7.8.13</ecNumber>
    </recommendedName>
    <alternativeName>
        <fullName evidence="1">UDP-MurNAc-pentapeptide phosphotransferase</fullName>
    </alternativeName>
</protein>
<reference key="1">
    <citation type="submission" date="2008-03" db="EMBL/GenBank/DDBJ databases">
        <title>Complete sequence of chromosome of Methylobacterium radiotolerans JCM 2831.</title>
        <authorList>
            <consortium name="US DOE Joint Genome Institute"/>
            <person name="Copeland A."/>
            <person name="Lucas S."/>
            <person name="Lapidus A."/>
            <person name="Glavina del Rio T."/>
            <person name="Dalin E."/>
            <person name="Tice H."/>
            <person name="Bruce D."/>
            <person name="Goodwin L."/>
            <person name="Pitluck S."/>
            <person name="Kiss H."/>
            <person name="Brettin T."/>
            <person name="Detter J.C."/>
            <person name="Han C."/>
            <person name="Kuske C.R."/>
            <person name="Schmutz J."/>
            <person name="Larimer F."/>
            <person name="Land M."/>
            <person name="Hauser L."/>
            <person name="Kyrpides N."/>
            <person name="Mikhailova N."/>
            <person name="Marx C.J."/>
            <person name="Richardson P."/>
        </authorList>
    </citation>
    <scope>NUCLEOTIDE SEQUENCE [LARGE SCALE GENOMIC DNA]</scope>
    <source>
        <strain>ATCC 27329 / DSM 1819 / JCM 2831 / NBRC 15690 / NCIMB 10815 / 0-1</strain>
    </source>
</reference>
<sequence>MLYLLSDLSSSFTPLNVFRYITFRTGGALFTAGLFVFWFGPWIISLLRIRQGKGQPIREDGPQTHLLTKRGTPTMGGLMILAGAVVAILLWANPRNHYVWVTLTVTLGFGAIGFYDDYLKVTKQSHKGFSGKFRLALEAVIAMAACVTIAVYSPAALQNQLAFPVFKDALLNLGWFYPLFGAFVIVGAGNSVNMTDGLDGLAIVPVMIACGTFGFIAYLVGNSFTASYLQVNYVRDTGELAVVCGAVIGAGLGFLWFNAPPAQIFMGDTGSLALGGLLGSIAVATKHEIVLAIVGGLFVLEMMSVIIQVASFKLTGKRVFRMAPIHHHFEQKGWKEPQVVIRFWIIAVILAMAGLATLKLR</sequence>
<accession>B1LXZ8</accession>
<proteinExistence type="inferred from homology"/>
<organism>
    <name type="scientific">Methylobacterium radiotolerans (strain ATCC 27329 / DSM 1819 / JCM 2831 / NBRC 15690 / NCIMB 10815 / 0-1)</name>
    <dbReference type="NCBI Taxonomy" id="426355"/>
    <lineage>
        <taxon>Bacteria</taxon>
        <taxon>Pseudomonadati</taxon>
        <taxon>Pseudomonadota</taxon>
        <taxon>Alphaproteobacteria</taxon>
        <taxon>Hyphomicrobiales</taxon>
        <taxon>Methylobacteriaceae</taxon>
        <taxon>Methylobacterium</taxon>
    </lineage>
</organism>
<name>MRAY_METRJ</name>
<feature type="chain" id="PRO_1000090644" description="Phospho-N-acetylmuramoyl-pentapeptide-transferase">
    <location>
        <begin position="1"/>
        <end position="361"/>
    </location>
</feature>
<feature type="transmembrane region" description="Helical" evidence="1">
    <location>
        <begin position="27"/>
        <end position="47"/>
    </location>
</feature>
<feature type="transmembrane region" description="Helical" evidence="1">
    <location>
        <begin position="72"/>
        <end position="92"/>
    </location>
</feature>
<feature type="transmembrane region" description="Helical" evidence="1">
    <location>
        <begin position="99"/>
        <end position="119"/>
    </location>
</feature>
<feature type="transmembrane region" description="Helical" evidence="1">
    <location>
        <begin position="135"/>
        <end position="155"/>
    </location>
</feature>
<feature type="transmembrane region" description="Helical" evidence="1">
    <location>
        <begin position="169"/>
        <end position="189"/>
    </location>
</feature>
<feature type="transmembrane region" description="Helical" evidence="1">
    <location>
        <begin position="200"/>
        <end position="220"/>
    </location>
</feature>
<feature type="transmembrane region" description="Helical" evidence="1">
    <location>
        <begin position="240"/>
        <end position="260"/>
    </location>
</feature>
<feature type="transmembrane region" description="Helical" evidence="1">
    <location>
        <begin position="264"/>
        <end position="284"/>
    </location>
</feature>
<feature type="transmembrane region" description="Helical" evidence="1">
    <location>
        <begin position="289"/>
        <end position="309"/>
    </location>
</feature>
<feature type="transmembrane region" description="Helical" evidence="1">
    <location>
        <begin position="338"/>
        <end position="358"/>
    </location>
</feature>
<dbReference type="EC" id="2.7.8.13" evidence="1"/>
<dbReference type="EMBL" id="CP001001">
    <property type="protein sequence ID" value="ACB24355.1"/>
    <property type="molecule type" value="Genomic_DNA"/>
</dbReference>
<dbReference type="RefSeq" id="WP_012319328.1">
    <property type="nucleotide sequence ID" value="NC_010505.1"/>
</dbReference>
<dbReference type="SMR" id="B1LXZ8"/>
<dbReference type="STRING" id="426355.Mrad2831_2360"/>
<dbReference type="GeneID" id="6138392"/>
<dbReference type="KEGG" id="mrd:Mrad2831_2360"/>
<dbReference type="eggNOG" id="COG0472">
    <property type="taxonomic scope" value="Bacteria"/>
</dbReference>
<dbReference type="HOGENOM" id="CLU_023982_0_0_5"/>
<dbReference type="OrthoDB" id="9805475at2"/>
<dbReference type="UniPathway" id="UPA00219"/>
<dbReference type="Proteomes" id="UP000006589">
    <property type="component" value="Chromosome"/>
</dbReference>
<dbReference type="GO" id="GO:0005886">
    <property type="term" value="C:plasma membrane"/>
    <property type="evidence" value="ECO:0007669"/>
    <property type="project" value="UniProtKB-SubCell"/>
</dbReference>
<dbReference type="GO" id="GO:0046872">
    <property type="term" value="F:metal ion binding"/>
    <property type="evidence" value="ECO:0007669"/>
    <property type="project" value="UniProtKB-KW"/>
</dbReference>
<dbReference type="GO" id="GO:0008963">
    <property type="term" value="F:phospho-N-acetylmuramoyl-pentapeptide-transferase activity"/>
    <property type="evidence" value="ECO:0007669"/>
    <property type="project" value="UniProtKB-UniRule"/>
</dbReference>
<dbReference type="GO" id="GO:0051992">
    <property type="term" value="F:UDP-N-acetylmuramoyl-L-alanyl-D-glutamyl-meso-2,6-diaminopimelyl-D-alanyl-D-alanine:undecaprenyl-phosphate transferase activity"/>
    <property type="evidence" value="ECO:0007669"/>
    <property type="project" value="RHEA"/>
</dbReference>
<dbReference type="GO" id="GO:0051301">
    <property type="term" value="P:cell division"/>
    <property type="evidence" value="ECO:0007669"/>
    <property type="project" value="UniProtKB-KW"/>
</dbReference>
<dbReference type="GO" id="GO:0071555">
    <property type="term" value="P:cell wall organization"/>
    <property type="evidence" value="ECO:0007669"/>
    <property type="project" value="UniProtKB-KW"/>
</dbReference>
<dbReference type="GO" id="GO:0009252">
    <property type="term" value="P:peptidoglycan biosynthetic process"/>
    <property type="evidence" value="ECO:0007669"/>
    <property type="project" value="UniProtKB-UniRule"/>
</dbReference>
<dbReference type="GO" id="GO:0008360">
    <property type="term" value="P:regulation of cell shape"/>
    <property type="evidence" value="ECO:0007669"/>
    <property type="project" value="UniProtKB-KW"/>
</dbReference>
<dbReference type="CDD" id="cd06852">
    <property type="entry name" value="GT_MraY"/>
    <property type="match status" value="1"/>
</dbReference>
<dbReference type="HAMAP" id="MF_00038">
    <property type="entry name" value="MraY"/>
    <property type="match status" value="1"/>
</dbReference>
<dbReference type="InterPro" id="IPR000715">
    <property type="entry name" value="Glycosyl_transferase_4"/>
</dbReference>
<dbReference type="InterPro" id="IPR003524">
    <property type="entry name" value="PNAcMuramoyl-5peptid_Trfase"/>
</dbReference>
<dbReference type="InterPro" id="IPR018480">
    <property type="entry name" value="PNAcMuramoyl-5peptid_Trfase_CS"/>
</dbReference>
<dbReference type="NCBIfam" id="TIGR00445">
    <property type="entry name" value="mraY"/>
    <property type="match status" value="1"/>
</dbReference>
<dbReference type="PANTHER" id="PTHR22926">
    <property type="entry name" value="PHOSPHO-N-ACETYLMURAMOYL-PENTAPEPTIDE-TRANSFERASE"/>
    <property type="match status" value="1"/>
</dbReference>
<dbReference type="PANTHER" id="PTHR22926:SF5">
    <property type="entry name" value="PHOSPHO-N-ACETYLMURAMOYL-PENTAPEPTIDE-TRANSFERASE HOMOLOG"/>
    <property type="match status" value="1"/>
</dbReference>
<dbReference type="Pfam" id="PF00953">
    <property type="entry name" value="Glycos_transf_4"/>
    <property type="match status" value="1"/>
</dbReference>
<dbReference type="Pfam" id="PF10555">
    <property type="entry name" value="MraY_sig1"/>
    <property type="match status" value="1"/>
</dbReference>
<dbReference type="PROSITE" id="PS01347">
    <property type="entry name" value="MRAY_1"/>
    <property type="match status" value="1"/>
</dbReference>
<dbReference type="PROSITE" id="PS01348">
    <property type="entry name" value="MRAY_2"/>
    <property type="match status" value="1"/>
</dbReference>
<comment type="function">
    <text evidence="1">Catalyzes the initial step of the lipid cycle reactions in the biosynthesis of the cell wall peptidoglycan: transfers peptidoglycan precursor phospho-MurNAc-pentapeptide from UDP-MurNAc-pentapeptide onto the lipid carrier undecaprenyl phosphate, yielding undecaprenyl-pyrophosphoryl-MurNAc-pentapeptide, known as lipid I.</text>
</comment>
<comment type="catalytic activity">
    <reaction evidence="1">
        <text>UDP-N-acetyl-alpha-D-muramoyl-L-alanyl-gamma-D-glutamyl-meso-2,6-diaminopimeloyl-D-alanyl-D-alanine + di-trans,octa-cis-undecaprenyl phosphate = di-trans,octa-cis-undecaprenyl diphospho-N-acetyl-alpha-D-muramoyl-L-alanyl-D-glutamyl-meso-2,6-diaminopimeloyl-D-alanyl-D-alanine + UMP</text>
        <dbReference type="Rhea" id="RHEA:28386"/>
        <dbReference type="ChEBI" id="CHEBI:57865"/>
        <dbReference type="ChEBI" id="CHEBI:60392"/>
        <dbReference type="ChEBI" id="CHEBI:61386"/>
        <dbReference type="ChEBI" id="CHEBI:61387"/>
        <dbReference type="EC" id="2.7.8.13"/>
    </reaction>
</comment>
<comment type="cofactor">
    <cofactor evidence="1">
        <name>Mg(2+)</name>
        <dbReference type="ChEBI" id="CHEBI:18420"/>
    </cofactor>
</comment>
<comment type="pathway">
    <text evidence="1">Cell wall biogenesis; peptidoglycan biosynthesis.</text>
</comment>
<comment type="subcellular location">
    <subcellularLocation>
        <location evidence="1">Cell inner membrane</location>
        <topology evidence="1">Multi-pass membrane protein</topology>
    </subcellularLocation>
</comment>
<comment type="similarity">
    <text evidence="1">Belongs to the glycosyltransferase 4 family. MraY subfamily.</text>
</comment>
<keyword id="KW-0131">Cell cycle</keyword>
<keyword id="KW-0132">Cell division</keyword>
<keyword id="KW-0997">Cell inner membrane</keyword>
<keyword id="KW-1003">Cell membrane</keyword>
<keyword id="KW-0133">Cell shape</keyword>
<keyword id="KW-0961">Cell wall biogenesis/degradation</keyword>
<keyword id="KW-0460">Magnesium</keyword>
<keyword id="KW-0472">Membrane</keyword>
<keyword id="KW-0479">Metal-binding</keyword>
<keyword id="KW-0573">Peptidoglycan synthesis</keyword>
<keyword id="KW-0808">Transferase</keyword>
<keyword id="KW-0812">Transmembrane</keyword>
<keyword id="KW-1133">Transmembrane helix</keyword>
<gene>
    <name evidence="1" type="primary">mraY</name>
    <name type="ordered locus">Mrad2831_2360</name>
</gene>